<dbReference type="EMBL" id="AC002339">
    <property type="protein sequence ID" value="AAC02764.1"/>
    <property type="molecule type" value="Genomic_DNA"/>
</dbReference>
<dbReference type="EMBL" id="CP002685">
    <property type="protein sequence ID" value="AEC10039.1"/>
    <property type="molecule type" value="Genomic_DNA"/>
</dbReference>
<dbReference type="EMBL" id="AY048250">
    <property type="protein sequence ID" value="AAK82512.1"/>
    <property type="molecule type" value="mRNA"/>
</dbReference>
<dbReference type="EMBL" id="AY133561">
    <property type="protein sequence ID" value="AAM91391.1"/>
    <property type="molecule type" value="mRNA"/>
</dbReference>
<dbReference type="EMBL" id="Z17622">
    <property type="protein sequence ID" value="CAA79017.1"/>
    <property type="molecule type" value="mRNA"/>
</dbReference>
<dbReference type="PIR" id="G84846">
    <property type="entry name" value="G84846"/>
</dbReference>
<dbReference type="RefSeq" id="NP_181715.1">
    <property type="nucleotide sequence ID" value="NM_129748.4"/>
</dbReference>
<dbReference type="SMR" id="P49688"/>
<dbReference type="BioGRID" id="4121">
    <property type="interactions" value="116"/>
</dbReference>
<dbReference type="FunCoup" id="P49688">
    <property type="interactions" value="3686"/>
</dbReference>
<dbReference type="IntAct" id="P49688">
    <property type="interactions" value="2"/>
</dbReference>
<dbReference type="STRING" id="3702.P49688"/>
<dbReference type="iPTMnet" id="P49688"/>
<dbReference type="PaxDb" id="3702-AT2G41840.1"/>
<dbReference type="ProteomicsDB" id="226548"/>
<dbReference type="EnsemblPlants" id="AT2G41840.1">
    <property type="protein sequence ID" value="AT2G41840.1"/>
    <property type="gene ID" value="AT2G41840"/>
</dbReference>
<dbReference type="GeneID" id="818784"/>
<dbReference type="Gramene" id="AT2G41840.1">
    <property type="protein sequence ID" value="AT2G41840.1"/>
    <property type="gene ID" value="AT2G41840"/>
</dbReference>
<dbReference type="KEGG" id="ath:AT2G41840"/>
<dbReference type="Araport" id="AT2G41840"/>
<dbReference type="TAIR" id="AT2G41840"/>
<dbReference type="eggNOG" id="KOG0877">
    <property type="taxonomic scope" value="Eukaryota"/>
</dbReference>
<dbReference type="HOGENOM" id="CLU_065898_0_2_1"/>
<dbReference type="InParanoid" id="P49688"/>
<dbReference type="OMA" id="PYEEWSD"/>
<dbReference type="OrthoDB" id="970021at2759"/>
<dbReference type="PhylomeDB" id="P49688"/>
<dbReference type="CD-CODE" id="4299E36E">
    <property type="entry name" value="Nucleolus"/>
</dbReference>
<dbReference type="PRO" id="PR:P49688"/>
<dbReference type="Proteomes" id="UP000006548">
    <property type="component" value="Chromosome 2"/>
</dbReference>
<dbReference type="ExpressionAtlas" id="P49688">
    <property type="expression patterns" value="baseline and differential"/>
</dbReference>
<dbReference type="GO" id="GO:0005829">
    <property type="term" value="C:cytosol"/>
    <property type="evidence" value="ECO:0007005"/>
    <property type="project" value="TAIR"/>
</dbReference>
<dbReference type="GO" id="GO:0022626">
    <property type="term" value="C:cytosolic ribosome"/>
    <property type="evidence" value="ECO:0007005"/>
    <property type="project" value="TAIR"/>
</dbReference>
<dbReference type="GO" id="GO:0022627">
    <property type="term" value="C:cytosolic small ribosomal subunit"/>
    <property type="evidence" value="ECO:0007005"/>
    <property type="project" value="TAIR"/>
</dbReference>
<dbReference type="GO" id="GO:0005730">
    <property type="term" value="C:nucleolus"/>
    <property type="evidence" value="ECO:0007005"/>
    <property type="project" value="TAIR"/>
</dbReference>
<dbReference type="GO" id="GO:0009506">
    <property type="term" value="C:plasmodesma"/>
    <property type="evidence" value="ECO:0007005"/>
    <property type="project" value="TAIR"/>
</dbReference>
<dbReference type="GO" id="GO:0003729">
    <property type="term" value="F:mRNA binding"/>
    <property type="evidence" value="ECO:0000314"/>
    <property type="project" value="TAIR"/>
</dbReference>
<dbReference type="GO" id="GO:0003735">
    <property type="term" value="F:structural constituent of ribosome"/>
    <property type="evidence" value="ECO:0000314"/>
    <property type="project" value="CAFA"/>
</dbReference>
<dbReference type="GO" id="GO:0031047">
    <property type="term" value="P:regulatory ncRNA-mediated gene silencing"/>
    <property type="evidence" value="ECO:0007669"/>
    <property type="project" value="UniProtKB-KW"/>
</dbReference>
<dbReference type="GO" id="GO:0006412">
    <property type="term" value="P:translation"/>
    <property type="evidence" value="ECO:0007669"/>
    <property type="project" value="InterPro"/>
</dbReference>
<dbReference type="FunFam" id="3.30.160.20:FF:000002">
    <property type="entry name" value="40S ribosomal protein S2"/>
    <property type="match status" value="1"/>
</dbReference>
<dbReference type="FunFam" id="3.30.230.10:FF:000004">
    <property type="entry name" value="40S ribosomal protein S2"/>
    <property type="match status" value="1"/>
</dbReference>
<dbReference type="Gene3D" id="3.30.160.20">
    <property type="match status" value="1"/>
</dbReference>
<dbReference type="Gene3D" id="3.30.230.10">
    <property type="match status" value="1"/>
</dbReference>
<dbReference type="InterPro" id="IPR020568">
    <property type="entry name" value="Ribosomal_Su5_D2-typ_SF"/>
</dbReference>
<dbReference type="InterPro" id="IPR000851">
    <property type="entry name" value="Ribosomal_uS5"/>
</dbReference>
<dbReference type="InterPro" id="IPR005324">
    <property type="entry name" value="Ribosomal_uS5_C"/>
</dbReference>
<dbReference type="InterPro" id="IPR005711">
    <property type="entry name" value="Ribosomal_uS5_euk/arc"/>
</dbReference>
<dbReference type="InterPro" id="IPR013810">
    <property type="entry name" value="Ribosomal_uS5_N"/>
</dbReference>
<dbReference type="InterPro" id="IPR018192">
    <property type="entry name" value="Ribosomal_uS5_N_CS"/>
</dbReference>
<dbReference type="InterPro" id="IPR014721">
    <property type="entry name" value="Ribsml_uS5_D2-typ_fold_subgr"/>
</dbReference>
<dbReference type="NCBIfam" id="TIGR01020">
    <property type="entry name" value="uS5_euk_arch"/>
    <property type="match status" value="1"/>
</dbReference>
<dbReference type="PANTHER" id="PTHR13718">
    <property type="entry name" value="RIBOSOMAL S SUBUNIT"/>
    <property type="match status" value="1"/>
</dbReference>
<dbReference type="PANTHER" id="PTHR13718:SF115">
    <property type="entry name" value="SMALL RIBOSOMAL SUBUNIT PROTEIN US5W-RELATED"/>
    <property type="match status" value="1"/>
</dbReference>
<dbReference type="Pfam" id="PF00333">
    <property type="entry name" value="Ribosomal_S5"/>
    <property type="match status" value="1"/>
</dbReference>
<dbReference type="Pfam" id="PF03719">
    <property type="entry name" value="Ribosomal_S5_C"/>
    <property type="match status" value="1"/>
</dbReference>
<dbReference type="SUPFAM" id="SSF54768">
    <property type="entry name" value="dsRNA-binding domain-like"/>
    <property type="match status" value="1"/>
</dbReference>
<dbReference type="SUPFAM" id="SSF54211">
    <property type="entry name" value="Ribosomal protein S5 domain 2-like"/>
    <property type="match status" value="1"/>
</dbReference>
<dbReference type="PROSITE" id="PS00585">
    <property type="entry name" value="RIBOSOMAL_S5"/>
    <property type="match status" value="1"/>
</dbReference>
<dbReference type="PROSITE" id="PS50881">
    <property type="entry name" value="S5_DSRBD"/>
    <property type="match status" value="1"/>
</dbReference>
<name>RS23_ARATH</name>
<organism>
    <name type="scientific">Arabidopsis thaliana</name>
    <name type="common">Mouse-ear cress</name>
    <dbReference type="NCBI Taxonomy" id="3702"/>
    <lineage>
        <taxon>Eukaryota</taxon>
        <taxon>Viridiplantae</taxon>
        <taxon>Streptophyta</taxon>
        <taxon>Embryophyta</taxon>
        <taxon>Tracheophyta</taxon>
        <taxon>Spermatophyta</taxon>
        <taxon>Magnoliopsida</taxon>
        <taxon>eudicotyledons</taxon>
        <taxon>Gunneridae</taxon>
        <taxon>Pentapetalae</taxon>
        <taxon>rosids</taxon>
        <taxon>malvids</taxon>
        <taxon>Brassicales</taxon>
        <taxon>Brassicaceae</taxon>
        <taxon>Camelineae</taxon>
        <taxon>Arabidopsis</taxon>
    </lineage>
</organism>
<sequence>MAERGGERGVERGGERGDFGRGFGGRGGRGDRGGRGRGGRGGRRGGRASEEEKWVPVTKLGRLVAAGHIKQIEQIYLHSLPVKEYQIIDMLIGPTLKDEVMKIMPVQKQTRAGQRTRFKAFVVVGDGNGHVGLGVKCSKEVATAIRGAIILAKLSVVPVRRGYWGNKIGKPHTVPCKVTGKCGSVTVRMVPAPRGSGIVAARVPKKVLQFAGIDDVFTSSRGSTKTLGNFVKATFDCLQKTYGFLTPEFWKETRFSRSPYQEHTDFLASKALSTSKPDPVVEDQA</sequence>
<reference key="1">
    <citation type="journal article" date="1999" name="Nature">
        <title>Sequence and analysis of chromosome 2 of the plant Arabidopsis thaliana.</title>
        <authorList>
            <person name="Lin X."/>
            <person name="Kaul S."/>
            <person name="Rounsley S.D."/>
            <person name="Shea T.P."/>
            <person name="Benito M.-I."/>
            <person name="Town C.D."/>
            <person name="Fujii C.Y."/>
            <person name="Mason T.M."/>
            <person name="Bowman C.L."/>
            <person name="Barnstead M.E."/>
            <person name="Feldblyum T.V."/>
            <person name="Buell C.R."/>
            <person name="Ketchum K.A."/>
            <person name="Lee J.J."/>
            <person name="Ronning C.M."/>
            <person name="Koo H.L."/>
            <person name="Moffat K.S."/>
            <person name="Cronin L.A."/>
            <person name="Shen M."/>
            <person name="Pai G."/>
            <person name="Van Aken S."/>
            <person name="Umayam L."/>
            <person name="Tallon L.J."/>
            <person name="Gill J.E."/>
            <person name="Adams M.D."/>
            <person name="Carrera A.J."/>
            <person name="Creasy T.H."/>
            <person name="Goodman H.M."/>
            <person name="Somerville C.R."/>
            <person name="Copenhaver G.P."/>
            <person name="Preuss D."/>
            <person name="Nierman W.C."/>
            <person name="White O."/>
            <person name="Eisen J.A."/>
            <person name="Salzberg S.L."/>
            <person name="Fraser C.M."/>
            <person name="Venter J.C."/>
        </authorList>
    </citation>
    <scope>NUCLEOTIDE SEQUENCE [LARGE SCALE GENOMIC DNA]</scope>
    <source>
        <strain>cv. Columbia</strain>
    </source>
</reference>
<reference key="2">
    <citation type="journal article" date="2017" name="Plant J.">
        <title>Araport11: a complete reannotation of the Arabidopsis thaliana reference genome.</title>
        <authorList>
            <person name="Cheng C.Y."/>
            <person name="Krishnakumar V."/>
            <person name="Chan A.P."/>
            <person name="Thibaud-Nissen F."/>
            <person name="Schobel S."/>
            <person name="Town C.D."/>
        </authorList>
    </citation>
    <scope>GENOME REANNOTATION</scope>
    <source>
        <strain>cv. Columbia</strain>
    </source>
</reference>
<reference key="3">
    <citation type="journal article" date="2003" name="Science">
        <title>Empirical analysis of transcriptional activity in the Arabidopsis genome.</title>
        <authorList>
            <person name="Yamada K."/>
            <person name="Lim J."/>
            <person name="Dale J.M."/>
            <person name="Chen H."/>
            <person name="Shinn P."/>
            <person name="Palm C.J."/>
            <person name="Southwick A.M."/>
            <person name="Wu H.C."/>
            <person name="Kim C.J."/>
            <person name="Nguyen M."/>
            <person name="Pham P.K."/>
            <person name="Cheuk R.F."/>
            <person name="Karlin-Newmann G."/>
            <person name="Liu S.X."/>
            <person name="Lam B."/>
            <person name="Sakano H."/>
            <person name="Wu T."/>
            <person name="Yu G."/>
            <person name="Miranda M."/>
            <person name="Quach H.L."/>
            <person name="Tripp M."/>
            <person name="Chang C.H."/>
            <person name="Lee J.M."/>
            <person name="Toriumi M.J."/>
            <person name="Chan M.M."/>
            <person name="Tang C.C."/>
            <person name="Onodera C.S."/>
            <person name="Deng J.M."/>
            <person name="Akiyama K."/>
            <person name="Ansari Y."/>
            <person name="Arakawa T."/>
            <person name="Banh J."/>
            <person name="Banno F."/>
            <person name="Bowser L."/>
            <person name="Brooks S.Y."/>
            <person name="Carninci P."/>
            <person name="Chao Q."/>
            <person name="Choy N."/>
            <person name="Enju A."/>
            <person name="Goldsmith A.D."/>
            <person name="Gurjal M."/>
            <person name="Hansen N.F."/>
            <person name="Hayashizaki Y."/>
            <person name="Johnson-Hopson C."/>
            <person name="Hsuan V.W."/>
            <person name="Iida K."/>
            <person name="Karnes M."/>
            <person name="Khan S."/>
            <person name="Koesema E."/>
            <person name="Ishida J."/>
            <person name="Jiang P.X."/>
            <person name="Jones T."/>
            <person name="Kawai J."/>
            <person name="Kamiya A."/>
            <person name="Meyers C."/>
            <person name="Nakajima M."/>
            <person name="Narusaka M."/>
            <person name="Seki M."/>
            <person name="Sakurai T."/>
            <person name="Satou M."/>
            <person name="Tamse R."/>
            <person name="Vaysberg M."/>
            <person name="Wallender E.K."/>
            <person name="Wong C."/>
            <person name="Yamamura Y."/>
            <person name="Yuan S."/>
            <person name="Shinozaki K."/>
            <person name="Davis R.W."/>
            <person name="Theologis A."/>
            <person name="Ecker J.R."/>
        </authorList>
    </citation>
    <scope>NUCLEOTIDE SEQUENCE [LARGE SCALE MRNA]</scope>
    <source>
        <strain>cv. Columbia</strain>
    </source>
</reference>
<reference key="4">
    <citation type="journal article" date="1993" name="Plant J.">
        <title>An inventory of 1152 expressed sequence tags obtained by partial sequencing of cDNAs from Arabidopsis thaliana.</title>
        <authorList>
            <person name="Hoefte H."/>
            <person name="Desprez T."/>
            <person name="Amselem J."/>
            <person name="Chiapello H."/>
            <person name="Rouze P."/>
            <person name="Caboche M."/>
            <person name="Moisan A."/>
            <person name="Jourjon M.-F."/>
            <person name="Charpenteau J.-L."/>
            <person name="Berthomieu P."/>
            <person name="Guerrier D."/>
            <person name="Giraudat J."/>
            <person name="Quigley F."/>
            <person name="Thomas F."/>
            <person name="Yu D.-Y."/>
            <person name="Mache R."/>
            <person name="Raynal M."/>
            <person name="Cooke R."/>
            <person name="Grellet F."/>
            <person name="Delseny M."/>
            <person name="Parmentier Y."/>
            <person name="de Marcillac G."/>
            <person name="Gigot C."/>
            <person name="Fleck J."/>
            <person name="Philipps G."/>
            <person name="Axelos M."/>
            <person name="Bardet C."/>
            <person name="Tremousaygue D."/>
            <person name="Lescure B."/>
        </authorList>
    </citation>
    <scope>NUCLEOTIDE SEQUENCE [LARGE SCALE MRNA] OF 119-285</scope>
    <source>
        <strain>cv. Columbia</strain>
        <tissue>Green siliques</tissue>
    </source>
</reference>
<reference key="5">
    <citation type="journal article" date="2001" name="Plant Physiol.">
        <title>The organization of cytoplasmic ribosomal protein genes in the Arabidopsis genome.</title>
        <authorList>
            <person name="Barakat A."/>
            <person name="Szick-Miranda K."/>
            <person name="Chang I.-F."/>
            <person name="Guyot R."/>
            <person name="Blanc G."/>
            <person name="Cooke R."/>
            <person name="Delseny M."/>
            <person name="Bailey-Serres J."/>
        </authorList>
    </citation>
    <scope>GENE FAMILY ORGANIZATION</scope>
    <scope>NOMENCLATURE</scope>
</reference>
<reference key="6">
    <citation type="journal article" date="2007" name="Mol. Cell. Proteomics">
        <title>Multidimensional protein identification technology (MudPIT) analysis of ubiquitinated proteins in plants.</title>
        <authorList>
            <person name="Maor R."/>
            <person name="Jones A."/>
            <person name="Nuehse T.S."/>
            <person name="Studholme D.J."/>
            <person name="Peck S.C."/>
            <person name="Shirasu K."/>
        </authorList>
    </citation>
    <scope>IDENTIFICATION BY MASS SPECTROMETRY [LARGE SCALE ANALYSIS]</scope>
    <source>
        <strain>cv. Landsberg erecta</strain>
    </source>
</reference>
<reference key="7">
    <citation type="journal article" date="2009" name="J. Proteomics">
        <title>Phosphoproteomic analysis of nuclei-enriched fractions from Arabidopsis thaliana.</title>
        <authorList>
            <person name="Jones A.M.E."/>
            <person name="MacLean D."/>
            <person name="Studholme D.J."/>
            <person name="Serna-Sanz A."/>
            <person name="Andreasson E."/>
            <person name="Rathjen J.P."/>
            <person name="Peck S.C."/>
        </authorList>
    </citation>
    <scope>IDENTIFICATION BY MASS SPECTROMETRY [LARGE SCALE ANALYSIS]</scope>
    <source>
        <strain>cv. Columbia</strain>
    </source>
</reference>
<reference key="8">
    <citation type="journal article" date="2009" name="Plant Physiol.">
        <title>Large-scale Arabidopsis phosphoproteome profiling reveals novel chloroplast kinase substrates and phosphorylation networks.</title>
        <authorList>
            <person name="Reiland S."/>
            <person name="Messerli G."/>
            <person name="Baerenfaller K."/>
            <person name="Gerrits B."/>
            <person name="Endler A."/>
            <person name="Grossmann J."/>
            <person name="Gruissem W."/>
            <person name="Baginsky S."/>
        </authorList>
    </citation>
    <scope>IDENTIFICATION BY MASS SPECTROMETRY [LARGE SCALE ANALYSIS]</scope>
</reference>
<reference key="9">
    <citation type="journal article" date="2017" name="J. Biosci.">
        <title>AtMBD6, a methyl CpG binding domain protein, maintains gene silencing in Arabidopsis by interacting with RNA binding proteins.</title>
        <authorList>
            <person name="Parida A.P."/>
            <person name="Sharma A."/>
            <person name="Sharma A.K."/>
        </authorList>
    </citation>
    <scope>FUNCTION</scope>
    <scope>DISRUPTION PHENOTYPE</scope>
    <scope>INTERACTION WITH MBD6</scope>
</reference>
<reference key="10">
    <citation type="journal article" date="2023" name="Plant Cell">
        <title>An updated nomenclature for plant ribosomal protein genes.</title>
        <authorList>
            <person name="Scarpin M.R."/>
            <person name="Busche M."/>
            <person name="Martinez R.E."/>
            <person name="Harper L.C."/>
            <person name="Reiser L."/>
            <person name="Szakonyi D."/>
            <person name="Merchante C."/>
            <person name="Lan T."/>
            <person name="Xiong W."/>
            <person name="Mo B."/>
            <person name="Tang G."/>
            <person name="Chen X."/>
            <person name="Bailey-Serres J."/>
            <person name="Browning K.S."/>
            <person name="Brunkard J.O."/>
        </authorList>
    </citation>
    <scope>NOMENCLATURE</scope>
</reference>
<comment type="function">
    <text evidence="1 4">Component of the ribosome, a large ribonucleoprotein complex responsible for the synthesis of proteins in the cell. The small ribosomal subunit (SSU) binds messenger RNAs (mRNAs) and translates the encoded message by selecting cognate aminoacyl-transfer RNA (tRNA) molecules. The large subunit (LSU) contains the ribosomal catalytic site termed the peptidyl transferase center (PTC), which catalyzes the formation of peptide bonds, thereby polymerizing the amino acids delivered by tRNAs into a polypeptide chain. The nascent polypeptides leave the ribosome through a tunnel in the LSU and interact with protein factors that function in enzymatic processing, targeting, and the membrane insertion of nascent chains at the exit of the ribosomal tunnel. Plays a role in the assembly and function of the 40S ribosomal subunit. Mutations in this protein affects the control of translational fidelity. Involved in nucleolar processing of pre-18S ribosomal RNA and ribosome assembly (By similarity). Also involved in RNA-directed DNA methylation (RdDM) (PubMed:28229965).</text>
</comment>
<comment type="subunit">
    <text evidence="4">Interacts with MBD6.</text>
</comment>
<comment type="disruption phenotype">
    <text evidence="4">Reduced DNA methylation in some of the targets of RNA-directed DNA methylation (RdDM).</text>
</comment>
<comment type="similarity">
    <text evidence="8">Belongs to the universal ribosomal protein uS5 family.</text>
</comment>
<accession>P49688</accession>
<accession>O22936</accession>
<proteinExistence type="evidence at protein level"/>
<evidence type="ECO:0000250" key="1">
    <source>
        <dbReference type="UniProtKB" id="P25443"/>
    </source>
</evidence>
<evidence type="ECO:0000255" key="2">
    <source>
        <dbReference type="PROSITE-ProRule" id="PRU00268"/>
    </source>
</evidence>
<evidence type="ECO:0000256" key="3">
    <source>
        <dbReference type="SAM" id="MobiDB-lite"/>
    </source>
</evidence>
<evidence type="ECO:0000269" key="4">
    <source>
    </source>
</evidence>
<evidence type="ECO:0000303" key="5">
    <source>
    </source>
</evidence>
<evidence type="ECO:0000303" key="6">
    <source>
    </source>
</evidence>
<evidence type="ECO:0000303" key="7">
    <source>
    </source>
</evidence>
<evidence type="ECO:0000305" key="8"/>
<evidence type="ECO:0000312" key="9">
    <source>
        <dbReference type="Araport" id="AT2G41840"/>
    </source>
</evidence>
<evidence type="ECO:0000312" key="10">
    <source>
        <dbReference type="EMBL" id="AAC02764.1"/>
    </source>
</evidence>
<feature type="chain" id="PRO_0000131682" description="Small ribosomal subunit protein uS5x">
    <location>
        <begin position="1"/>
        <end position="285"/>
    </location>
</feature>
<feature type="domain" description="S5 DRBM" evidence="2">
    <location>
        <begin position="96"/>
        <end position="159"/>
    </location>
</feature>
<feature type="region of interest" description="Disordered" evidence="3">
    <location>
        <begin position="1"/>
        <end position="51"/>
    </location>
</feature>
<feature type="compositionally biased region" description="Basic and acidic residues" evidence="3">
    <location>
        <begin position="1"/>
        <end position="19"/>
    </location>
</feature>
<feature type="compositionally biased region" description="Basic residues" evidence="3">
    <location>
        <begin position="35"/>
        <end position="46"/>
    </location>
</feature>
<feature type="sequence conflict" description="In Ref. 4; CAA79017." evidence="8" ref="4">
    <original>AS</original>
    <variation>ST</variation>
    <location>
        <begin position="268"/>
        <end position="269"/>
    </location>
</feature>
<feature type="sequence conflict" description="In Ref. 4; CAA79017." evidence="8" ref="4">
    <original>LSTSKPDPVV</original>
    <variation>VSATKVITEG</variation>
    <location>
        <begin position="272"/>
        <end position="281"/>
    </location>
</feature>
<keyword id="KW-1185">Reference proteome</keyword>
<keyword id="KW-0687">Ribonucleoprotein</keyword>
<keyword id="KW-0689">Ribosomal protein</keyword>
<keyword id="KW-0943">RNA-mediated gene silencing</keyword>
<protein>
    <recommendedName>
        <fullName evidence="7">Small ribosomal subunit protein uS5x</fullName>
    </recommendedName>
    <alternativeName>
        <fullName evidence="5">40S ribosomal protein S2-3</fullName>
        <shortName evidence="5 6">AtRPS2C</shortName>
    </alternativeName>
</protein>
<gene>
    <name evidence="5 6" type="primary">RPS2C</name>
    <name evidence="9" type="ordered locus">At2g41840</name>
    <name evidence="10" type="ORF">T11A07.6</name>
</gene>